<comment type="function">
    <text evidence="1">Plays an essential role in viral DNA replication. Binds the origin of replication and cleaves the dsDNA replicative form I (RFI) and becomes covalently bound to it via phosphotyrosine bond, generating the dsDNA replicative form II (RFII). In turn, viral DNA replication initiates at the 3'-OH of the cleavage site. After one round of rolling circle synthesis, protein ORF4 is linked to the newly synthesized ssDNA and joins the ends of the displaced strand to generate a circular single-stranded molecule ready to be packed into a virion.</text>
</comment>
<comment type="catalytic activity">
    <reaction>
        <text>ATP + (deoxyribonucleotide)n-3'-hydroxyl + 5'-phospho-(deoxyribonucleotide)m = (deoxyribonucleotide)n+m + AMP + diphosphate.</text>
        <dbReference type="EC" id="6.5.1.1"/>
    </reaction>
</comment>
<comment type="similarity">
    <text evidence="2">Belongs to the microviridae Rep protein family.</text>
</comment>
<comment type="sequence caution" evidence="2">
    <conflict type="erroneous initiation">
        <sequence resource="EMBL-CDS" id="BAA00512"/>
    </conflict>
</comment>
<protein>
    <recommendedName>
        <fullName>Replication-associated protein ORF4</fullName>
        <ecNumber>3.1.21.-</ecNumber>
        <ecNumber>6.5.1.1</ecNumber>
    </recommendedName>
    <alternativeName>
        <fullName>Rep</fullName>
    </alternativeName>
</protein>
<dbReference type="EC" id="3.1.21.-"/>
<dbReference type="EC" id="6.5.1.1"/>
<dbReference type="EMBL" id="D00624">
    <property type="protein sequence ID" value="BAA00511.1"/>
    <property type="molecule type" value="Genomic_DNA"/>
</dbReference>
<dbReference type="EMBL" id="D00624">
    <property type="protein sequence ID" value="BAA00512.1"/>
    <property type="status" value="ALT_INIT"/>
    <property type="molecule type" value="Genomic_DNA"/>
</dbReference>
<dbReference type="KEGG" id="vg:1261210"/>
<dbReference type="KEGG" id="vg:1261211"/>
<dbReference type="OrthoDB" id="15873at10239"/>
<dbReference type="Proteomes" id="UP000002125">
    <property type="component" value="Genome"/>
</dbReference>
<dbReference type="GO" id="GO:0005524">
    <property type="term" value="F:ATP binding"/>
    <property type="evidence" value="ECO:0007669"/>
    <property type="project" value="UniProtKB-KW"/>
</dbReference>
<dbReference type="GO" id="GO:0003910">
    <property type="term" value="F:DNA ligase (ATP) activity"/>
    <property type="evidence" value="ECO:0007669"/>
    <property type="project" value="UniProtKB-EC"/>
</dbReference>
<dbReference type="GO" id="GO:0004519">
    <property type="term" value="F:endonuclease activity"/>
    <property type="evidence" value="ECO:0007669"/>
    <property type="project" value="UniProtKB-KW"/>
</dbReference>
<dbReference type="InterPro" id="IPR056906">
    <property type="entry name" value="ORF2/G2P_dom"/>
</dbReference>
<dbReference type="Pfam" id="PF23343">
    <property type="entry name" value="REP_ORF2-G2P"/>
    <property type="match status" value="1"/>
</dbReference>
<sequence>MRYSLDSYLISVYIRLTQRKSDYMCTNPIIPIVQYKVPVKSSLDVVDWSKFRSNFKANLFFFEKNVVRRAVSNVDEAFRFTEQLKQVSYLSTFDLDGYHQVKQFSFPLPCRKCSECLQKRSKDLAVQATMEARSHEENSVLILTYDNDHLGDNILDYDHIRVFQKRLRRYVDYHYGKKIKFLTVGEYGDKKGRMHWHMIVFGWKPKSEEQLEPYLGGKYRTDVRYRSRKLKELWKFGYVDVDEATDGNIFYVARYVQKKFVVGCDLDSSKSSSRREKKTASQALGLDYFFSYLRQFLKTKRIVLNGFRYGFPRYFKDLLRKLVSEDSEFDTEYYNALRKRLLSVCSYSMVNKYFTYLECLVEVLPVLNFHDLYQRALRYMDQSILKPHASDHDGEYNTT</sequence>
<reference key="1">
    <citation type="journal article" date="1989" name="J. Gen. Virol.">
        <title>Analysis of the complete nucleotide sequence of Chp1, a phage which infects avian Chlamydia psittaci.</title>
        <authorList>
            <person name="Storey C.C."/>
            <person name="Lusher M."/>
            <person name="Richmond S.J."/>
        </authorList>
    </citation>
    <scope>NUCLEOTIDE SEQUENCE [GENOMIC DNA]</scope>
</reference>
<name>REP_BPCHP</name>
<keyword id="KW-0067">ATP-binding</keyword>
<keyword id="KW-0255">Endonuclease</keyword>
<keyword id="KW-0378">Hydrolase</keyword>
<keyword id="KW-0436">Ligase</keyword>
<keyword id="KW-0540">Nuclease</keyword>
<keyword id="KW-0547">Nucleotide-binding</keyword>
<keyword id="KW-1185">Reference proteome</keyword>
<proteinExistence type="inferred from homology"/>
<organismHost>
    <name type="scientific">Chlamydia psittaci</name>
    <name type="common">Chlamydophila psittaci</name>
    <dbReference type="NCBI Taxonomy" id="83554"/>
</organismHost>
<organism>
    <name type="scientific">Chlamydia phage 1</name>
    <name type="common">Bacteriophage Chp1</name>
    <dbReference type="NCBI Taxonomy" id="2003327"/>
    <lineage>
        <taxon>Viruses</taxon>
        <taxon>Monodnaviria</taxon>
        <taxon>Sangervirae</taxon>
        <taxon>Phixviricota</taxon>
        <taxon>Malgrandaviricetes</taxon>
        <taxon>Petitvirales</taxon>
        <taxon>Microviridae</taxon>
        <taxon>Gokushovirinae</taxon>
        <taxon>Chlamydiamicrovirus</taxon>
    </lineage>
</organism>
<feature type="chain" id="PRO_0000066092" description="Replication-associated protein ORF4">
    <location>
        <begin position="1"/>
        <end position="399"/>
    </location>
</feature>
<feature type="active site" description="O-(5'-phospho-DNA)-tyrosine intermediate" evidence="1">
    <location>
        <position position="251"/>
    </location>
</feature>
<feature type="active site" description="O-(5'-phospho-DNA)-tyrosine intermediate" evidence="1">
    <location>
        <position position="255"/>
    </location>
</feature>
<accession>P19189</accession>
<accession>P19186</accession>
<evidence type="ECO:0000250" key="1"/>
<evidence type="ECO:0000305" key="2"/>
<gene>
    <name type="ORF">ORF4</name>
</gene>